<organism>
    <name type="scientific">Pongo abelii</name>
    <name type="common">Sumatran orangutan</name>
    <name type="synonym">Pongo pygmaeus abelii</name>
    <dbReference type="NCBI Taxonomy" id="9601"/>
    <lineage>
        <taxon>Eukaryota</taxon>
        <taxon>Metazoa</taxon>
        <taxon>Chordata</taxon>
        <taxon>Craniata</taxon>
        <taxon>Vertebrata</taxon>
        <taxon>Euteleostomi</taxon>
        <taxon>Mammalia</taxon>
        <taxon>Eutheria</taxon>
        <taxon>Euarchontoglires</taxon>
        <taxon>Primates</taxon>
        <taxon>Haplorrhini</taxon>
        <taxon>Catarrhini</taxon>
        <taxon>Hominidae</taxon>
        <taxon>Pongo</taxon>
    </lineage>
</organism>
<accession>Q5RF53</accession>
<reference key="1">
    <citation type="submission" date="2004-11" db="EMBL/GenBank/DDBJ databases">
        <authorList>
            <consortium name="The German cDNA consortium"/>
        </authorList>
    </citation>
    <scope>NUCLEOTIDE SEQUENCE [LARGE SCALE MRNA]</scope>
    <source>
        <tissue>Kidney</tissue>
    </source>
</reference>
<proteinExistence type="evidence at transcript level"/>
<sequence>MAVLAPLIALVYSVPRLSRWLAQPYYLLSALLSAAFLLVRKLPPLCHGLPTQREDGNPCDFDWREVEILMFLSAIVMMKNRRSITVEQHIGNIFMFSKVANAILFFRLDIRMGLLYITLCIVFLMTCEPPLYMGPEYIKYFNDKTIDEELERDKKVTWIVEFFANWSNDCQSFAPIYADLSLKYNCTGLNFGKVDVGRYTDVSMRYKVSTSPLTKQLPTLILFQGGKEVMRRPQIDKKGRAVSWTFSEENVIREFNLNELYQRAKKPSKAGDSIPEEQPVASAPTTVSDGENKKDK</sequence>
<feature type="signal peptide" evidence="2">
    <location>
        <begin position="1"/>
        <end position="48"/>
    </location>
</feature>
<feature type="chain" id="PRO_0000315755" description="Thioredoxin-related transmembrane protein 2">
    <location>
        <begin position="49"/>
        <end position="296"/>
    </location>
</feature>
<feature type="topological domain" description="Extracellular" evidence="2">
    <location>
        <begin position="49"/>
        <end position="102"/>
    </location>
</feature>
<feature type="transmembrane region" description="Helical" evidence="2">
    <location>
        <begin position="103"/>
        <end position="125"/>
    </location>
</feature>
<feature type="topological domain" description="Cytoplasmic" evidence="2">
    <location>
        <begin position="126"/>
        <end position="296"/>
    </location>
</feature>
<feature type="domain" description="Thioredoxin" evidence="3">
    <location>
        <begin position="114"/>
        <end position="270"/>
    </location>
</feature>
<feature type="region of interest" description="Disordered" evidence="4">
    <location>
        <begin position="266"/>
        <end position="296"/>
    </location>
</feature>
<feature type="short sequence motif" description="Di-lysine motif" evidence="5">
    <location>
        <begin position="293"/>
        <end position="296"/>
    </location>
</feature>
<feature type="modified residue" description="Phosphoserine" evidence="1">
    <location>
        <position position="211"/>
    </location>
</feature>
<feature type="modified residue" description="Phosphoserine" evidence="1">
    <location>
        <position position="243"/>
    </location>
</feature>
<feature type="modified residue" description="Phosphoserine" evidence="1">
    <location>
        <position position="288"/>
    </location>
</feature>
<evidence type="ECO:0000250" key="1">
    <source>
        <dbReference type="UniProtKB" id="Q9Y320"/>
    </source>
</evidence>
<evidence type="ECO:0000255" key="2"/>
<evidence type="ECO:0000255" key="3">
    <source>
        <dbReference type="PROSITE-ProRule" id="PRU00691"/>
    </source>
</evidence>
<evidence type="ECO:0000256" key="4">
    <source>
        <dbReference type="SAM" id="MobiDB-lite"/>
    </source>
</evidence>
<evidence type="ECO:0000305" key="5"/>
<dbReference type="EMBL" id="CR857308">
    <property type="protein sequence ID" value="CAH89604.1"/>
    <property type="molecule type" value="mRNA"/>
</dbReference>
<dbReference type="RefSeq" id="NP_001127174.1">
    <property type="nucleotide sequence ID" value="NM_001133702.2"/>
</dbReference>
<dbReference type="BMRB" id="Q5RF53"/>
<dbReference type="SMR" id="Q5RF53"/>
<dbReference type="FunCoup" id="Q5RF53">
    <property type="interactions" value="1119"/>
</dbReference>
<dbReference type="GeneID" id="100174226"/>
<dbReference type="KEGG" id="pon:100174226"/>
<dbReference type="CTD" id="51075"/>
<dbReference type="InParanoid" id="Q5RF53"/>
<dbReference type="OrthoDB" id="20229at2759"/>
<dbReference type="Proteomes" id="UP000001595">
    <property type="component" value="Unplaced"/>
</dbReference>
<dbReference type="GO" id="GO:0005789">
    <property type="term" value="C:endoplasmic reticulum membrane"/>
    <property type="evidence" value="ECO:0007669"/>
    <property type="project" value="UniProtKB-SubCell"/>
</dbReference>
<dbReference type="GO" id="GO:0044233">
    <property type="term" value="C:mitochondria-associated endoplasmic reticulum membrane contact site"/>
    <property type="evidence" value="ECO:0000250"/>
    <property type="project" value="UniProtKB"/>
</dbReference>
<dbReference type="GO" id="GO:0031966">
    <property type="term" value="C:mitochondrial membrane"/>
    <property type="evidence" value="ECO:0007669"/>
    <property type="project" value="UniProtKB-SubCell"/>
</dbReference>
<dbReference type="GO" id="GO:0015036">
    <property type="term" value="F:disulfide oxidoreductase activity"/>
    <property type="evidence" value="ECO:0000250"/>
    <property type="project" value="UniProtKB"/>
</dbReference>
<dbReference type="GO" id="GO:0007420">
    <property type="term" value="P:brain development"/>
    <property type="evidence" value="ECO:0000250"/>
    <property type="project" value="UniProtKB"/>
</dbReference>
<dbReference type="CDD" id="cd02962">
    <property type="entry name" value="TMX2"/>
    <property type="match status" value="1"/>
</dbReference>
<dbReference type="Gene3D" id="3.40.30.10">
    <property type="entry name" value="Glutaredoxin"/>
    <property type="match status" value="1"/>
</dbReference>
<dbReference type="InterPro" id="IPR036249">
    <property type="entry name" value="Thioredoxin-like_sf"/>
</dbReference>
<dbReference type="InterPro" id="IPR013766">
    <property type="entry name" value="Thioredoxin_domain"/>
</dbReference>
<dbReference type="InterPro" id="IPR039101">
    <property type="entry name" value="TMX2"/>
</dbReference>
<dbReference type="InterPro" id="IPR037463">
    <property type="entry name" value="TMX2_thioredoxin_dom"/>
</dbReference>
<dbReference type="PANTHER" id="PTHR15853">
    <property type="entry name" value="THIOREDOXIN-RELATED"/>
    <property type="match status" value="1"/>
</dbReference>
<dbReference type="PANTHER" id="PTHR15853:SF0">
    <property type="entry name" value="THIOREDOXIN-RELATED TRANSMEMBRANE PROTEIN 2"/>
    <property type="match status" value="1"/>
</dbReference>
<dbReference type="Pfam" id="PF00085">
    <property type="entry name" value="Thioredoxin"/>
    <property type="match status" value="1"/>
</dbReference>
<dbReference type="SUPFAM" id="SSF52833">
    <property type="entry name" value="Thioredoxin-like"/>
    <property type="match status" value="1"/>
</dbReference>
<dbReference type="PROSITE" id="PS51352">
    <property type="entry name" value="THIOREDOXIN_2"/>
    <property type="match status" value="1"/>
</dbReference>
<gene>
    <name type="primary">TMX2</name>
    <name type="synonym">TXNDC14</name>
</gene>
<name>TMX2_PONAB</name>
<comment type="function">
    <text evidence="1">Endoplasmic reticulum and mitochondria-associated protein that probably functions as a regulator of cellular redox state and thereby regulates protein post-translational modification, protein folding and mitochondrial activity. Indirectly regulates neuronal proliferation, migration, and organization in the developing brain.</text>
</comment>
<comment type="subunit">
    <text evidence="1">Monomer (By similarity). Homodimer; disulfide-linked (By similarity). Occurs in both reduced and oxidized monomeric form (By similarity). Oxidative conditions increase homodimerization (By similarity). Interacts with CANX (By similarity). Interacts with ATP2A2 (By similarity).</text>
</comment>
<comment type="subcellular location">
    <subcellularLocation>
        <location evidence="1">Endoplasmic reticulum membrane</location>
        <topology evidence="2">Single-pass type I membrane protein</topology>
    </subcellularLocation>
    <subcellularLocation>
        <location evidence="1">Mitochondrion membrane</location>
        <topology evidence="2">Single-pass type I membrane protein</topology>
    </subcellularLocation>
    <text evidence="1">Localizes to endoplasmic reticulum mitochondria-associated membrane (MAMs) that connect the endoplasmic reticulum and the mitochondria.</text>
</comment>
<comment type="domain">
    <text evidence="5">The thioredoxin domain lacks the 2 redox-active cysteines, suggesting that it lacks thioredoxin activity.</text>
</comment>
<comment type="domain">
    <text evidence="5">The di-lysine motif confers endoplasmic reticulum localization for type I membrane proteins.</text>
</comment>
<keyword id="KW-1015">Disulfide bond</keyword>
<keyword id="KW-0256">Endoplasmic reticulum</keyword>
<keyword id="KW-0472">Membrane</keyword>
<keyword id="KW-0496">Mitochondrion</keyword>
<keyword id="KW-0597">Phosphoprotein</keyword>
<keyword id="KW-1185">Reference proteome</keyword>
<keyword id="KW-0732">Signal</keyword>
<keyword id="KW-0812">Transmembrane</keyword>
<keyword id="KW-1133">Transmembrane helix</keyword>
<protein>
    <recommendedName>
        <fullName>Thioredoxin-related transmembrane protein 2</fullName>
    </recommendedName>
    <alternativeName>
        <fullName>Thioredoxin domain-containing protein 14</fullName>
    </alternativeName>
</protein>